<comment type="function">
    <text evidence="1">Specifically methylates the N7 position of a guanine in 16S rRNA.</text>
</comment>
<comment type="subcellular location">
    <subcellularLocation>
        <location evidence="1">Cytoplasm</location>
    </subcellularLocation>
</comment>
<comment type="similarity">
    <text evidence="1">Belongs to the methyltransferase superfamily. RNA methyltransferase RsmG family.</text>
</comment>
<evidence type="ECO:0000255" key="1">
    <source>
        <dbReference type="HAMAP-Rule" id="MF_00074"/>
    </source>
</evidence>
<gene>
    <name evidence="1" type="primary">rsmG</name>
    <name type="ordered locus">BAD_1626</name>
</gene>
<reference key="1">
    <citation type="submission" date="2006-12" db="EMBL/GenBank/DDBJ databases">
        <title>Bifidobacterium adolescentis complete genome sequence.</title>
        <authorList>
            <person name="Suzuki T."/>
            <person name="Tsuda Y."/>
            <person name="Kanou N."/>
            <person name="Inoue T."/>
            <person name="Kumazaki K."/>
            <person name="Nagano S."/>
            <person name="Hirai S."/>
            <person name="Tanaka K."/>
            <person name="Watanabe K."/>
        </authorList>
    </citation>
    <scope>NUCLEOTIDE SEQUENCE [LARGE SCALE GENOMIC DNA]</scope>
    <source>
        <strain>ATCC 15703 / DSM 20083 / NCTC 11814 / E194a</strain>
    </source>
</reference>
<dbReference type="EC" id="2.1.1.-" evidence="1"/>
<dbReference type="EMBL" id="AP009256">
    <property type="protein sequence ID" value="BAF40407.1"/>
    <property type="molecule type" value="Genomic_DNA"/>
</dbReference>
<dbReference type="SMR" id="A1A3X4"/>
<dbReference type="STRING" id="367928.BAD_1626"/>
<dbReference type="PaxDb" id="1680-BADO_1740"/>
<dbReference type="KEGG" id="bad:BAD_1626"/>
<dbReference type="HOGENOM" id="CLU_065341_5_0_11"/>
<dbReference type="Proteomes" id="UP000008702">
    <property type="component" value="Chromosome"/>
</dbReference>
<dbReference type="GO" id="GO:0005829">
    <property type="term" value="C:cytosol"/>
    <property type="evidence" value="ECO:0007669"/>
    <property type="project" value="TreeGrafter"/>
</dbReference>
<dbReference type="GO" id="GO:0070043">
    <property type="term" value="F:rRNA (guanine-N7-)-methyltransferase activity"/>
    <property type="evidence" value="ECO:0007669"/>
    <property type="project" value="UniProtKB-UniRule"/>
</dbReference>
<dbReference type="Gene3D" id="3.40.50.150">
    <property type="entry name" value="Vaccinia Virus protein VP39"/>
    <property type="match status" value="1"/>
</dbReference>
<dbReference type="HAMAP" id="MF_00074">
    <property type="entry name" value="16SrRNA_methyltr_G"/>
    <property type="match status" value="1"/>
</dbReference>
<dbReference type="InterPro" id="IPR003682">
    <property type="entry name" value="rRNA_ssu_MeTfrase_G"/>
</dbReference>
<dbReference type="InterPro" id="IPR029063">
    <property type="entry name" value="SAM-dependent_MTases_sf"/>
</dbReference>
<dbReference type="NCBIfam" id="TIGR00138">
    <property type="entry name" value="rsmG_gidB"/>
    <property type="match status" value="1"/>
</dbReference>
<dbReference type="PANTHER" id="PTHR31760">
    <property type="entry name" value="S-ADENOSYL-L-METHIONINE-DEPENDENT METHYLTRANSFERASES SUPERFAMILY PROTEIN"/>
    <property type="match status" value="1"/>
</dbReference>
<dbReference type="PANTHER" id="PTHR31760:SF0">
    <property type="entry name" value="S-ADENOSYL-L-METHIONINE-DEPENDENT METHYLTRANSFERASES SUPERFAMILY PROTEIN"/>
    <property type="match status" value="1"/>
</dbReference>
<dbReference type="Pfam" id="PF02527">
    <property type="entry name" value="GidB"/>
    <property type="match status" value="2"/>
</dbReference>
<dbReference type="SUPFAM" id="SSF53335">
    <property type="entry name" value="S-adenosyl-L-methionine-dependent methyltransferases"/>
    <property type="match status" value="1"/>
</dbReference>
<sequence length="249" mass="26866">MRMVCMSDVNDELDGSPILEEVLGDALGKLKVFHVKLAAEGEPRGLIGPRDVGIIWERHILNSAAIVPFIREATAKRQFKTVADIGSGGGFPGIVAAACLPDHQFTLVEPMERRIEWLHECVDEMGLDNVSIVRSRANAVIEAVRGSNGGRKGRGEDAVDLDGNPIPVRHPFAVVTCRAVAPMTKLSGWTLPLLDKGGRLVALKGRSAQEEIVKATKEISKNGGIHPRVVEAEVGPGLEPTHVLMVDER</sequence>
<organism>
    <name type="scientific">Bifidobacterium adolescentis (strain ATCC 15703 / DSM 20083 / NCTC 11814 / E194a)</name>
    <dbReference type="NCBI Taxonomy" id="367928"/>
    <lineage>
        <taxon>Bacteria</taxon>
        <taxon>Bacillati</taxon>
        <taxon>Actinomycetota</taxon>
        <taxon>Actinomycetes</taxon>
        <taxon>Bifidobacteriales</taxon>
        <taxon>Bifidobacteriaceae</taxon>
        <taxon>Bifidobacterium</taxon>
    </lineage>
</organism>
<accession>A1A3X4</accession>
<feature type="chain" id="PRO_0000335312" description="Ribosomal RNA small subunit methyltransferase G">
    <location>
        <begin position="1"/>
        <end position="249"/>
    </location>
</feature>
<feature type="binding site" evidence="1">
    <location>
        <position position="86"/>
    </location>
    <ligand>
        <name>S-adenosyl-L-methionine</name>
        <dbReference type="ChEBI" id="CHEBI:59789"/>
    </ligand>
</feature>
<feature type="binding site" evidence="1">
    <location>
        <position position="91"/>
    </location>
    <ligand>
        <name>S-adenosyl-L-methionine</name>
        <dbReference type="ChEBI" id="CHEBI:59789"/>
    </ligand>
</feature>
<feature type="binding site" evidence="1">
    <location>
        <position position="178"/>
    </location>
    <ligand>
        <name>S-adenosyl-L-methionine</name>
        <dbReference type="ChEBI" id="CHEBI:59789"/>
    </ligand>
</feature>
<proteinExistence type="inferred from homology"/>
<protein>
    <recommendedName>
        <fullName evidence="1">Ribosomal RNA small subunit methyltransferase G</fullName>
        <ecNumber evidence="1">2.1.1.-</ecNumber>
    </recommendedName>
    <alternativeName>
        <fullName evidence="1">16S rRNA 7-methylguanosine methyltransferase</fullName>
        <shortName evidence="1">16S rRNA m7G methyltransferase</shortName>
    </alternativeName>
</protein>
<name>RSMG_BIFAA</name>
<keyword id="KW-0963">Cytoplasm</keyword>
<keyword id="KW-0489">Methyltransferase</keyword>
<keyword id="KW-1185">Reference proteome</keyword>
<keyword id="KW-0698">rRNA processing</keyword>
<keyword id="KW-0949">S-adenosyl-L-methionine</keyword>
<keyword id="KW-0808">Transferase</keyword>